<name>OBG_RUEST</name>
<reference key="1">
    <citation type="submission" date="2006-05" db="EMBL/GenBank/DDBJ databases">
        <title>Complete sequence of chromosome of Silicibacter sp. TM1040.</title>
        <authorList>
            <consortium name="US DOE Joint Genome Institute"/>
            <person name="Copeland A."/>
            <person name="Lucas S."/>
            <person name="Lapidus A."/>
            <person name="Barry K."/>
            <person name="Detter J.C."/>
            <person name="Glavina del Rio T."/>
            <person name="Hammon N."/>
            <person name="Israni S."/>
            <person name="Dalin E."/>
            <person name="Tice H."/>
            <person name="Pitluck S."/>
            <person name="Brettin T."/>
            <person name="Bruce D."/>
            <person name="Han C."/>
            <person name="Tapia R."/>
            <person name="Goodwin L."/>
            <person name="Thompson L.S."/>
            <person name="Gilna P."/>
            <person name="Schmutz J."/>
            <person name="Larimer F."/>
            <person name="Land M."/>
            <person name="Hauser L."/>
            <person name="Kyrpides N."/>
            <person name="Kim E."/>
            <person name="Belas R."/>
            <person name="Moran M.A."/>
            <person name="Buchan A."/>
            <person name="Gonzalez J.M."/>
            <person name="Schell M.A."/>
            <person name="Sun F."/>
            <person name="Richardson P."/>
        </authorList>
    </citation>
    <scope>NUCLEOTIDE SEQUENCE [LARGE SCALE GENOMIC DNA]</scope>
    <source>
        <strain>TM1040</strain>
    </source>
</reference>
<comment type="function">
    <text evidence="1">An essential GTPase which binds GTP, GDP and possibly (p)ppGpp with moderate affinity, with high nucleotide exchange rates and a fairly low GTP hydrolysis rate. Plays a role in control of the cell cycle, stress response, ribosome biogenesis and in those bacteria that undergo differentiation, in morphogenesis control.</text>
</comment>
<comment type="cofactor">
    <cofactor evidence="1">
        <name>Mg(2+)</name>
        <dbReference type="ChEBI" id="CHEBI:18420"/>
    </cofactor>
</comment>
<comment type="subunit">
    <text evidence="1">Monomer.</text>
</comment>
<comment type="subcellular location">
    <subcellularLocation>
        <location evidence="1">Cytoplasm</location>
    </subcellularLocation>
</comment>
<comment type="similarity">
    <text evidence="1">Belongs to the TRAFAC class OBG-HflX-like GTPase superfamily. OBG GTPase family.</text>
</comment>
<organism>
    <name type="scientific">Ruegeria sp. (strain TM1040)</name>
    <name type="common">Silicibacter sp.</name>
    <dbReference type="NCBI Taxonomy" id="292414"/>
    <lineage>
        <taxon>Bacteria</taxon>
        <taxon>Pseudomonadati</taxon>
        <taxon>Pseudomonadota</taxon>
        <taxon>Alphaproteobacteria</taxon>
        <taxon>Rhodobacterales</taxon>
        <taxon>Roseobacteraceae</taxon>
        <taxon>Ruegeria</taxon>
    </lineage>
</organism>
<protein>
    <recommendedName>
        <fullName evidence="1">GTPase Obg</fullName>
        <ecNumber evidence="1">3.6.5.-</ecNumber>
    </recommendedName>
    <alternativeName>
        <fullName evidence="1">GTP-binding protein Obg</fullName>
    </alternativeName>
</protein>
<sequence>MKFLDLAKVYIRSGAGGNGCVSFRREKFIEYGGPDGGDGGKGGSVWAEAVDGLNTLIDFRYQQHFFAKNGQSGMGRQRSGKDGDEIVLRVPVGTEILDEDEETVLADLTHVGERVLLAKGGNGGFGNLHFKSSTNQAPRRANSGQEGVERTIWLRLKLIADAGLLGLPNAGKSTFLSSTSNARPKIADYPFTTLHPNLGVVGIDNTEFVMADIPGLIEGAHEGRGIGDRFLGHVERCAVLLHLVDGTSETVAEDYRTIINELEAYGGELASKPRVTALNKIDALDDEERAEARAALEAEVGAPVLMMSSVSREGLDLVLRAVRAEIDDDRLRIKQAEASEEEDTPWQP</sequence>
<accession>Q1GHD0</accession>
<feature type="chain" id="PRO_0000386261" description="GTPase Obg">
    <location>
        <begin position="1"/>
        <end position="348"/>
    </location>
</feature>
<feature type="domain" description="Obg" evidence="2">
    <location>
        <begin position="1"/>
        <end position="159"/>
    </location>
</feature>
<feature type="domain" description="OBG-type G" evidence="1">
    <location>
        <begin position="160"/>
        <end position="327"/>
    </location>
</feature>
<feature type="binding site" evidence="1">
    <location>
        <begin position="166"/>
        <end position="173"/>
    </location>
    <ligand>
        <name>GTP</name>
        <dbReference type="ChEBI" id="CHEBI:37565"/>
    </ligand>
</feature>
<feature type="binding site" evidence="1">
    <location>
        <position position="173"/>
    </location>
    <ligand>
        <name>Mg(2+)</name>
        <dbReference type="ChEBI" id="CHEBI:18420"/>
    </ligand>
</feature>
<feature type="binding site" evidence="1">
    <location>
        <begin position="191"/>
        <end position="195"/>
    </location>
    <ligand>
        <name>GTP</name>
        <dbReference type="ChEBI" id="CHEBI:37565"/>
    </ligand>
</feature>
<feature type="binding site" evidence="1">
    <location>
        <position position="193"/>
    </location>
    <ligand>
        <name>Mg(2+)</name>
        <dbReference type="ChEBI" id="CHEBI:18420"/>
    </ligand>
</feature>
<feature type="binding site" evidence="1">
    <location>
        <begin position="212"/>
        <end position="215"/>
    </location>
    <ligand>
        <name>GTP</name>
        <dbReference type="ChEBI" id="CHEBI:37565"/>
    </ligand>
</feature>
<feature type="binding site" evidence="1">
    <location>
        <begin position="279"/>
        <end position="282"/>
    </location>
    <ligand>
        <name>GTP</name>
        <dbReference type="ChEBI" id="CHEBI:37565"/>
    </ligand>
</feature>
<feature type="binding site" evidence="1">
    <location>
        <begin position="308"/>
        <end position="310"/>
    </location>
    <ligand>
        <name>GTP</name>
        <dbReference type="ChEBI" id="CHEBI:37565"/>
    </ligand>
</feature>
<dbReference type="EC" id="3.6.5.-" evidence="1"/>
<dbReference type="EMBL" id="CP000377">
    <property type="protein sequence ID" value="ABF63936.1"/>
    <property type="molecule type" value="Genomic_DNA"/>
</dbReference>
<dbReference type="RefSeq" id="WP_011538542.1">
    <property type="nucleotide sequence ID" value="NC_008044.1"/>
</dbReference>
<dbReference type="SMR" id="Q1GHD0"/>
<dbReference type="STRING" id="292414.TM1040_1203"/>
<dbReference type="KEGG" id="sit:TM1040_1203"/>
<dbReference type="eggNOG" id="COG0536">
    <property type="taxonomic scope" value="Bacteria"/>
</dbReference>
<dbReference type="HOGENOM" id="CLU_011747_2_0_5"/>
<dbReference type="OrthoDB" id="9807318at2"/>
<dbReference type="Proteomes" id="UP000000636">
    <property type="component" value="Chromosome"/>
</dbReference>
<dbReference type="GO" id="GO:0005737">
    <property type="term" value="C:cytoplasm"/>
    <property type="evidence" value="ECO:0007669"/>
    <property type="project" value="UniProtKB-SubCell"/>
</dbReference>
<dbReference type="GO" id="GO:0005525">
    <property type="term" value="F:GTP binding"/>
    <property type="evidence" value="ECO:0007669"/>
    <property type="project" value="UniProtKB-UniRule"/>
</dbReference>
<dbReference type="GO" id="GO:0003924">
    <property type="term" value="F:GTPase activity"/>
    <property type="evidence" value="ECO:0007669"/>
    <property type="project" value="UniProtKB-UniRule"/>
</dbReference>
<dbReference type="GO" id="GO:0000287">
    <property type="term" value="F:magnesium ion binding"/>
    <property type="evidence" value="ECO:0007669"/>
    <property type="project" value="InterPro"/>
</dbReference>
<dbReference type="GO" id="GO:0042254">
    <property type="term" value="P:ribosome biogenesis"/>
    <property type="evidence" value="ECO:0007669"/>
    <property type="project" value="UniProtKB-UniRule"/>
</dbReference>
<dbReference type="CDD" id="cd01898">
    <property type="entry name" value="Obg"/>
    <property type="match status" value="1"/>
</dbReference>
<dbReference type="FunFam" id="2.70.210.12:FF:000001">
    <property type="entry name" value="GTPase Obg"/>
    <property type="match status" value="1"/>
</dbReference>
<dbReference type="Gene3D" id="2.70.210.12">
    <property type="entry name" value="GTP1/OBG domain"/>
    <property type="match status" value="1"/>
</dbReference>
<dbReference type="Gene3D" id="3.40.50.300">
    <property type="entry name" value="P-loop containing nucleotide triphosphate hydrolases"/>
    <property type="match status" value="1"/>
</dbReference>
<dbReference type="HAMAP" id="MF_01454">
    <property type="entry name" value="GTPase_Obg"/>
    <property type="match status" value="1"/>
</dbReference>
<dbReference type="InterPro" id="IPR031167">
    <property type="entry name" value="G_OBG"/>
</dbReference>
<dbReference type="InterPro" id="IPR006073">
    <property type="entry name" value="GTP-bd"/>
</dbReference>
<dbReference type="InterPro" id="IPR014100">
    <property type="entry name" value="GTP-bd_Obg/CgtA"/>
</dbReference>
<dbReference type="InterPro" id="IPR006074">
    <property type="entry name" value="GTP1-OBG_CS"/>
</dbReference>
<dbReference type="InterPro" id="IPR006169">
    <property type="entry name" value="GTP1_OBG_dom"/>
</dbReference>
<dbReference type="InterPro" id="IPR036726">
    <property type="entry name" value="GTP1_OBG_dom_sf"/>
</dbReference>
<dbReference type="InterPro" id="IPR045086">
    <property type="entry name" value="OBG_GTPase"/>
</dbReference>
<dbReference type="InterPro" id="IPR027417">
    <property type="entry name" value="P-loop_NTPase"/>
</dbReference>
<dbReference type="InterPro" id="IPR005225">
    <property type="entry name" value="Small_GTP-bd"/>
</dbReference>
<dbReference type="NCBIfam" id="TIGR02729">
    <property type="entry name" value="Obg_CgtA"/>
    <property type="match status" value="1"/>
</dbReference>
<dbReference type="NCBIfam" id="NF008955">
    <property type="entry name" value="PRK12297.1"/>
    <property type="match status" value="1"/>
</dbReference>
<dbReference type="NCBIfam" id="NF008956">
    <property type="entry name" value="PRK12299.1"/>
    <property type="match status" value="1"/>
</dbReference>
<dbReference type="NCBIfam" id="TIGR00231">
    <property type="entry name" value="small_GTP"/>
    <property type="match status" value="1"/>
</dbReference>
<dbReference type="PANTHER" id="PTHR11702">
    <property type="entry name" value="DEVELOPMENTALLY REGULATED GTP-BINDING PROTEIN-RELATED"/>
    <property type="match status" value="1"/>
</dbReference>
<dbReference type="PANTHER" id="PTHR11702:SF31">
    <property type="entry name" value="MITOCHONDRIAL RIBOSOME-ASSOCIATED GTPASE 2"/>
    <property type="match status" value="1"/>
</dbReference>
<dbReference type="Pfam" id="PF01018">
    <property type="entry name" value="GTP1_OBG"/>
    <property type="match status" value="1"/>
</dbReference>
<dbReference type="Pfam" id="PF01926">
    <property type="entry name" value="MMR_HSR1"/>
    <property type="match status" value="1"/>
</dbReference>
<dbReference type="PIRSF" id="PIRSF002401">
    <property type="entry name" value="GTP_bd_Obg/CgtA"/>
    <property type="match status" value="1"/>
</dbReference>
<dbReference type="PRINTS" id="PR00326">
    <property type="entry name" value="GTP1OBG"/>
</dbReference>
<dbReference type="SUPFAM" id="SSF82051">
    <property type="entry name" value="Obg GTP-binding protein N-terminal domain"/>
    <property type="match status" value="1"/>
</dbReference>
<dbReference type="SUPFAM" id="SSF52540">
    <property type="entry name" value="P-loop containing nucleoside triphosphate hydrolases"/>
    <property type="match status" value="1"/>
</dbReference>
<dbReference type="PROSITE" id="PS51710">
    <property type="entry name" value="G_OBG"/>
    <property type="match status" value="1"/>
</dbReference>
<dbReference type="PROSITE" id="PS00905">
    <property type="entry name" value="GTP1_OBG"/>
    <property type="match status" value="1"/>
</dbReference>
<dbReference type="PROSITE" id="PS51883">
    <property type="entry name" value="OBG"/>
    <property type="match status" value="1"/>
</dbReference>
<evidence type="ECO:0000255" key="1">
    <source>
        <dbReference type="HAMAP-Rule" id="MF_01454"/>
    </source>
</evidence>
<evidence type="ECO:0000255" key="2">
    <source>
        <dbReference type="PROSITE-ProRule" id="PRU01231"/>
    </source>
</evidence>
<gene>
    <name evidence="1" type="primary">obg</name>
    <name type="ordered locus">TM1040_1203</name>
</gene>
<keyword id="KW-0963">Cytoplasm</keyword>
<keyword id="KW-0342">GTP-binding</keyword>
<keyword id="KW-0378">Hydrolase</keyword>
<keyword id="KW-0460">Magnesium</keyword>
<keyword id="KW-0479">Metal-binding</keyword>
<keyword id="KW-0547">Nucleotide-binding</keyword>
<keyword id="KW-1185">Reference proteome</keyword>
<proteinExistence type="inferred from homology"/>